<name>YHAV_ECOLI</name>
<evidence type="ECO:0000269" key="1">
    <source>
    </source>
</evidence>
<comment type="function">
    <text evidence="1">Toxic component of a type II toxin-antitoxin (TA) system. Has RNase activity in vitro. Overexpression leads to growth arrest after 30 minutes; these effects are overcome by concomitant expression of antitoxin SohA (PrlF). Massive overexpression is toxic. Unlike most other characterized TA systems degrades rRNA, and co-folding of the both TA proteins is necessary in vitro for inhibition of the RNase activity. It is not known if it has any sequence-specificity. Acts as a transcription factor. The YhaV/PrlF complex binds the prlF-yhaV operon, probably negatively regulating its expression.</text>
</comment>
<comment type="subunit">
    <text evidence="1">Homohexamer; forms a complex with PrlF (SohA) with stoichiometry PrlF(2)-YhaV(4), possibly as a YhaV(2)-PrlF(2)-YhaV(2) complex like the MazFE complex. This complex is seen to dimerize in solution.</text>
</comment>
<dbReference type="EC" id="3.1.-.-"/>
<dbReference type="EMBL" id="U18997">
    <property type="protein sequence ID" value="AAA57933.1"/>
    <property type="molecule type" value="Genomic_DNA"/>
</dbReference>
<dbReference type="EMBL" id="U00096">
    <property type="protein sequence ID" value="AAC76164.1"/>
    <property type="molecule type" value="Genomic_DNA"/>
</dbReference>
<dbReference type="EMBL" id="AP009048">
    <property type="protein sequence ID" value="BAE77177.1"/>
    <property type="molecule type" value="Genomic_DNA"/>
</dbReference>
<dbReference type="PIR" id="F65102">
    <property type="entry name" value="F65102"/>
</dbReference>
<dbReference type="RefSeq" id="NP_417599.1">
    <property type="nucleotide sequence ID" value="NC_000913.3"/>
</dbReference>
<dbReference type="RefSeq" id="WP_000347273.1">
    <property type="nucleotide sequence ID" value="NZ_LN832404.1"/>
</dbReference>
<dbReference type="SMR" id="P64594"/>
<dbReference type="BioGRID" id="4262413">
    <property type="interactions" value="9"/>
</dbReference>
<dbReference type="ComplexPortal" id="CPX-4102">
    <property type="entry name" value="PrlF-YhaV toxin-antitoxin complex"/>
</dbReference>
<dbReference type="FunCoup" id="P64594">
    <property type="interactions" value="23"/>
</dbReference>
<dbReference type="STRING" id="511145.b3130"/>
<dbReference type="jPOST" id="P64594"/>
<dbReference type="PaxDb" id="511145-b3130"/>
<dbReference type="EnsemblBacteria" id="AAC76164">
    <property type="protein sequence ID" value="AAC76164"/>
    <property type="gene ID" value="b3130"/>
</dbReference>
<dbReference type="GeneID" id="947638"/>
<dbReference type="KEGG" id="ecj:JW3099"/>
<dbReference type="KEGG" id="eco:b3130"/>
<dbReference type="KEGG" id="ecoc:C3026_17060"/>
<dbReference type="PATRIC" id="fig|1411691.4.peg.3601"/>
<dbReference type="EchoBASE" id="EB2614"/>
<dbReference type="eggNOG" id="ENOG502ZB6Z">
    <property type="taxonomic scope" value="Bacteria"/>
</dbReference>
<dbReference type="HOGENOM" id="CLU_137758_0_0_6"/>
<dbReference type="InParanoid" id="P64594"/>
<dbReference type="OMA" id="QRHGWTL"/>
<dbReference type="OrthoDB" id="515905at2"/>
<dbReference type="PhylomeDB" id="P64594"/>
<dbReference type="BioCyc" id="EcoCyc:G7629-MONOMER"/>
<dbReference type="BioCyc" id="MetaCyc:G7629-MONOMER"/>
<dbReference type="PRO" id="PR:P64594"/>
<dbReference type="Proteomes" id="UP000000625">
    <property type="component" value="Chromosome"/>
</dbReference>
<dbReference type="GO" id="GO:0110001">
    <property type="term" value="C:toxin-antitoxin complex"/>
    <property type="evidence" value="ECO:0000353"/>
    <property type="project" value="ComplexPortal"/>
</dbReference>
<dbReference type="GO" id="GO:0042803">
    <property type="term" value="F:protein homodimerization activity"/>
    <property type="evidence" value="ECO:0000314"/>
    <property type="project" value="EcoCyc"/>
</dbReference>
<dbReference type="GO" id="GO:0043023">
    <property type="term" value="F:ribosomal large subunit binding"/>
    <property type="evidence" value="ECO:0000314"/>
    <property type="project" value="EcoCyc"/>
</dbReference>
<dbReference type="GO" id="GO:0004521">
    <property type="term" value="F:RNA endonuclease activity"/>
    <property type="evidence" value="ECO:0000314"/>
    <property type="project" value="EcoCyc"/>
</dbReference>
<dbReference type="GO" id="GO:0004540">
    <property type="term" value="F:RNA nuclease activity"/>
    <property type="evidence" value="ECO:0000314"/>
    <property type="project" value="EcoCyc"/>
</dbReference>
<dbReference type="GO" id="GO:0006402">
    <property type="term" value="P:mRNA catabolic process"/>
    <property type="evidence" value="ECO:0000314"/>
    <property type="project" value="EcoCyc"/>
</dbReference>
<dbReference type="GO" id="GO:0030308">
    <property type="term" value="P:negative regulation of cell growth"/>
    <property type="evidence" value="ECO:0000315"/>
    <property type="project" value="EcoCyc"/>
</dbReference>
<dbReference type="GO" id="GO:0006355">
    <property type="term" value="P:regulation of DNA-templated transcription"/>
    <property type="evidence" value="ECO:0000303"/>
    <property type="project" value="ComplexPortal"/>
</dbReference>
<dbReference type="GO" id="GO:0040008">
    <property type="term" value="P:regulation of growth"/>
    <property type="evidence" value="ECO:0000303"/>
    <property type="project" value="ComplexPortal"/>
</dbReference>
<dbReference type="GO" id="GO:0044010">
    <property type="term" value="P:single-species biofilm formation"/>
    <property type="evidence" value="ECO:0000314"/>
    <property type="project" value="ComplexPortal"/>
</dbReference>
<dbReference type="InterPro" id="IPR021679">
    <property type="entry name" value="Toxin_endonuclease_YhaV"/>
</dbReference>
<dbReference type="Pfam" id="PF11663">
    <property type="entry name" value="Toxin_YhaV"/>
    <property type="match status" value="1"/>
</dbReference>
<organism>
    <name type="scientific">Escherichia coli (strain K12)</name>
    <dbReference type="NCBI Taxonomy" id="83333"/>
    <lineage>
        <taxon>Bacteria</taxon>
        <taxon>Pseudomonadati</taxon>
        <taxon>Pseudomonadota</taxon>
        <taxon>Gammaproteobacteria</taxon>
        <taxon>Enterobacterales</taxon>
        <taxon>Enterobacteriaceae</taxon>
        <taxon>Escherichia</taxon>
    </lineage>
</organism>
<feature type="chain" id="PRO_0000169450" description="Ribonuclease toxin YhaV">
    <location>
        <begin position="1"/>
        <end position="154"/>
    </location>
</feature>
<feature type="mutagenesis site" description="Complete loss of toxicity." evidence="1">
    <original>RVKFGAGRYR</original>
    <variation>AVKFGAGRYA</variation>
    <location>
        <begin position="85"/>
        <end position="94"/>
    </location>
</feature>
<feature type="mutagenesis site" description="Partial loss of toxicity." evidence="1">
    <original>R</original>
    <variation>A</variation>
    <location>
        <position position="85"/>
    </location>
</feature>
<feature type="mutagenesis site" description="Partial loss of toxicity." evidence="1">
    <original>R</original>
    <variation>A</variation>
    <location>
        <position position="94"/>
    </location>
</feature>
<accession>P64594</accession>
<accession>P42901</accession>
<accession>Q2M979</accession>
<sequence length="154" mass="17836">MDFPQRVNGWALYAHPCFQETYDALVAEVETLKGKDPENYQRKAATKLLAVVHKVIEEHITVNPSSPAFRHGKSLGSGKNKDWSRVKFGAGRYRLFFRYSEKEKVIILGWMNDENTLRTYGKKTDAYTVFSKMLKRGHPPADWETLTRETEETH</sequence>
<proteinExistence type="evidence at protein level"/>
<gene>
    <name type="primary">yhaV</name>
    <name type="ordered locus">b3130</name>
    <name type="ordered locus">JW3099</name>
</gene>
<keyword id="KW-0255">Endonuclease</keyword>
<keyword id="KW-0378">Hydrolase</keyword>
<keyword id="KW-0540">Nuclease</keyword>
<keyword id="KW-1185">Reference proteome</keyword>
<keyword id="KW-0678">Repressor</keyword>
<keyword id="KW-1277">Toxin-antitoxin system</keyword>
<keyword id="KW-0804">Transcription</keyword>
<keyword id="KW-0805">Transcription regulation</keyword>
<protein>
    <recommendedName>
        <fullName>Ribonuclease toxin YhaV</fullName>
        <ecNumber>3.1.-.-</ecNumber>
    </recommendedName>
    <alternativeName>
        <fullName>Ribonuclease YhaV</fullName>
    </alternativeName>
</protein>
<reference key="1">
    <citation type="journal article" date="1997" name="Science">
        <title>The complete genome sequence of Escherichia coli K-12.</title>
        <authorList>
            <person name="Blattner F.R."/>
            <person name="Plunkett G. III"/>
            <person name="Bloch C.A."/>
            <person name="Perna N.T."/>
            <person name="Burland V."/>
            <person name="Riley M."/>
            <person name="Collado-Vides J."/>
            <person name="Glasner J.D."/>
            <person name="Rode C.K."/>
            <person name="Mayhew G.F."/>
            <person name="Gregor J."/>
            <person name="Davis N.W."/>
            <person name="Kirkpatrick H.A."/>
            <person name="Goeden M.A."/>
            <person name="Rose D.J."/>
            <person name="Mau B."/>
            <person name="Shao Y."/>
        </authorList>
    </citation>
    <scope>NUCLEOTIDE SEQUENCE [LARGE SCALE GENOMIC DNA]</scope>
    <source>
        <strain>K12 / MG1655 / ATCC 47076</strain>
    </source>
</reference>
<reference key="2">
    <citation type="journal article" date="2006" name="Mol. Syst. Biol.">
        <title>Highly accurate genome sequences of Escherichia coli K-12 strains MG1655 and W3110.</title>
        <authorList>
            <person name="Hayashi K."/>
            <person name="Morooka N."/>
            <person name="Yamamoto Y."/>
            <person name="Fujita K."/>
            <person name="Isono K."/>
            <person name="Choi S."/>
            <person name="Ohtsubo E."/>
            <person name="Baba T."/>
            <person name="Wanner B.L."/>
            <person name="Mori H."/>
            <person name="Horiuchi T."/>
        </authorList>
    </citation>
    <scope>NUCLEOTIDE SEQUENCE [LARGE SCALE GENOMIC DNA]</scope>
    <source>
        <strain>K12 / W3110 / ATCC 27325 / DSM 5911</strain>
    </source>
</reference>
<reference key="3">
    <citation type="journal article" date="2007" name="J. Mol. Biol.">
        <title>prlF and yhaV encode a new toxin-antitoxin system in Escherichia coli.</title>
        <authorList>
            <person name="Schmidt O."/>
            <person name="Schuenemann V.J."/>
            <person name="Hand N.J."/>
            <person name="Silhavy T.J."/>
            <person name="Martin J."/>
            <person name="Lupas A.N."/>
            <person name="Djuranovic S."/>
        </authorList>
    </citation>
    <scope>FUNCTION AS A TOXIN</scope>
    <scope>FUNCTION AS A RIBONUCLEASE</scope>
    <scope>SUBUNIT</scope>
    <scope>MUTAGENESIS OF ARG-85; 85-ARG--ARG-94 AND ARG-94</scope>
    <scope>OPERON STRUCTURE</scope>
    <source>
        <strain>K12 / W3110 / ATCC 27325 / DSM 5911</strain>
    </source>
</reference>
<reference key="4">
    <citation type="journal article" date="2009" name="Prog. Mol. Biol. Transl. Sci.">
        <title>mRNA interferases, sequence-specific endoribonucleases from the toxin-antitoxin systems.</title>
        <authorList>
            <person name="Yamaguchi Y."/>
            <person name="Inouye M."/>
        </authorList>
    </citation>
    <scope>REVIEW</scope>
</reference>
<reference key="5">
    <citation type="journal article" date="2011" name="Proc. Natl. Acad. Sci. U.S.A.">
        <title>Bacterial persistence by RNA endonucleases.</title>
        <authorList>
            <person name="Maisonneuve E."/>
            <person name="Shakespeare L.J."/>
            <person name="Joergensen M.G."/>
            <person name="Gerdes K."/>
        </authorList>
    </citation>
    <scope>RETRACTED PAPER</scope>
    <source>
        <strain>K12 / MG1655 / ATCC 47076</strain>
    </source>
</reference>
<reference key="6">
    <citation type="journal article" date="2018" name="Proc. Natl. Acad. Sci. U.S.A.">
        <authorList>
            <person name="Maisonneuve E."/>
            <person name="Shakespeare L.J."/>
            <person name="Joergensen M.G."/>
            <person name="Gerdes K."/>
        </authorList>
    </citation>
    <scope>RETRACTION NOTICE OF PUBMED:21788497</scope>
</reference>